<organism>
    <name type="scientific">Bos taurus</name>
    <name type="common">Bovine</name>
    <dbReference type="NCBI Taxonomy" id="9913"/>
    <lineage>
        <taxon>Eukaryota</taxon>
        <taxon>Metazoa</taxon>
        <taxon>Chordata</taxon>
        <taxon>Craniata</taxon>
        <taxon>Vertebrata</taxon>
        <taxon>Euteleostomi</taxon>
        <taxon>Mammalia</taxon>
        <taxon>Eutheria</taxon>
        <taxon>Laurasiatheria</taxon>
        <taxon>Artiodactyla</taxon>
        <taxon>Ruminantia</taxon>
        <taxon>Pecora</taxon>
        <taxon>Bovidae</taxon>
        <taxon>Bovinae</taxon>
        <taxon>Bos</taxon>
    </lineage>
</organism>
<sequence>MGTLGARRGLEWFLGFYFLSHIPITLLMDLQGVLPRDLYPVELRNLQQWYIEEFKDPLLQTPPAWFKSFLFCELVFQLPFFPIAAYAFFKGGCKWIRTPAIIYSVHTMTTLIPILSTLLLDDFSKASHFRGQGPKTFQERLFLISVYIPYFLIPLILLLFMVRNPYYKSEEKRKKK</sequence>
<reference key="1">
    <citation type="journal article" date="2005" name="BMC Genomics">
        <title>Characterization of 954 bovine full-CDS cDNA sequences.</title>
        <authorList>
            <person name="Harhay G.P."/>
            <person name="Sonstegard T.S."/>
            <person name="Keele J.W."/>
            <person name="Heaton M.P."/>
            <person name="Clawson M.L."/>
            <person name="Snelling W.M."/>
            <person name="Wiedmann R.T."/>
            <person name="Van Tassell C.P."/>
            <person name="Smith T.P.L."/>
        </authorList>
    </citation>
    <scope>NUCLEOTIDE SEQUENCE [LARGE SCALE MRNA]</scope>
</reference>
<reference key="2">
    <citation type="submission" date="2005-09" db="EMBL/GenBank/DDBJ databases">
        <authorList>
            <consortium name="NIH - Mammalian Gene Collection (MGC) project"/>
        </authorList>
    </citation>
    <scope>NUCLEOTIDE SEQUENCE [LARGE SCALE MRNA]</scope>
    <source>
        <strain>Hereford</strain>
        <tissue>Uterus</tissue>
    </source>
</reference>
<reference key="3">
    <citation type="journal article" date="2017" name="Proc. Natl. Acad. Sci. U.S.A.">
        <title>Identification of the gene that codes for the sigma2 receptor.</title>
        <authorList>
            <person name="Alon A."/>
            <person name="Schmidt H.R."/>
            <person name="Wood M.D."/>
            <person name="Sahn J.J."/>
            <person name="Martin S.F."/>
            <person name="Kruse A.C."/>
        </authorList>
    </citation>
    <scope>FUNCTION</scope>
</reference>
<reference evidence="10 11 12 13 14" key="4">
    <citation type="journal article" date="2021" name="Nature">
        <title>Structures of the sigma2 receptor enable docking for bioactive ligand discovery.</title>
        <authorList>
            <person name="Alon A."/>
            <person name="Lyu J."/>
            <person name="Braz J.M."/>
            <person name="Tummino T.A."/>
            <person name="Craik V."/>
            <person name="O'Meara M.J."/>
            <person name="Webb C.M."/>
            <person name="Radchenko D.S."/>
            <person name="Moroz Y.S."/>
            <person name="Huang X.P."/>
            <person name="Liu Y."/>
            <person name="Roth B.L."/>
            <person name="Irwin J.J."/>
            <person name="Basbaum A.I."/>
            <person name="Shoichet B.K."/>
            <person name="Kruse A.C."/>
        </authorList>
    </citation>
    <scope>X-RAY CRYSTALLOGRAPHY (2.41 ANGSTROMS) OF 1-168</scope>
    <scope>FUNCTION</scope>
    <scope>HOMODIMER</scope>
</reference>
<protein>
    <recommendedName>
        <fullName evidence="7">Sigma intracellular receptor 2</fullName>
        <shortName evidence="7">Sigma-2 receptor</shortName>
        <shortName evidence="7">Sigma2 receptor</shortName>
    </recommendedName>
    <alternativeName>
        <fullName>Transmembrane protein 97</fullName>
    </alternativeName>
</protein>
<feature type="chain" id="PRO_0000254566" description="Sigma intracellular receptor 2">
    <location>
        <begin position="1"/>
        <end position="176"/>
    </location>
</feature>
<feature type="topological domain" description="Cytoplasmic" evidence="1">
    <location>
        <begin position="1"/>
        <end position="9"/>
    </location>
</feature>
<feature type="transmembrane region" description="Helical; Name=1" evidence="3">
    <location>
        <begin position="10"/>
        <end position="30"/>
    </location>
</feature>
<feature type="topological domain" description="Lumenal" evidence="1">
    <location>
        <begin position="31"/>
        <end position="68"/>
    </location>
</feature>
<feature type="transmembrane region" description="Helical; Name=2" evidence="3">
    <location>
        <begin position="69"/>
        <end position="89"/>
    </location>
</feature>
<feature type="topological domain" description="Cytoplasmic" evidence="1">
    <location>
        <begin position="90"/>
        <end position="99"/>
    </location>
</feature>
<feature type="transmembrane region" description="Helical; Name=3" evidence="3">
    <location>
        <begin position="100"/>
        <end position="120"/>
    </location>
</feature>
<feature type="topological domain" description="Lumenal" evidence="1">
    <location>
        <begin position="121"/>
        <end position="141"/>
    </location>
</feature>
<feature type="transmembrane region" description="Helical; Name=4" evidence="3">
    <location>
        <begin position="142"/>
        <end position="162"/>
    </location>
</feature>
<feature type="topological domain" description="Cytoplasmic" evidence="1">
    <location>
        <begin position="163"/>
        <end position="176"/>
    </location>
</feature>
<feature type="domain" description="EXPERA" evidence="4">
    <location>
        <begin position="10"/>
        <end position="158"/>
    </location>
</feature>
<feature type="short sequence motif" description="ER retention motif" evidence="2">
    <location>
        <begin position="172"/>
        <end position="176"/>
    </location>
</feature>
<feature type="binding site" evidence="6 14">
    <location>
        <position position="75"/>
    </location>
    <ligand>
        <name>cholesterol</name>
        <dbReference type="ChEBI" id="CHEBI:16113"/>
    </ligand>
</feature>
<feature type="binding site" evidence="6 14">
    <location>
        <position position="77"/>
    </location>
    <ligand>
        <name>cholesterol</name>
        <dbReference type="ChEBI" id="CHEBI:16113"/>
    </ligand>
</feature>
<feature type="site" description="Likely important for receptor folding" evidence="2">
    <location>
        <position position="56"/>
    </location>
</feature>
<feature type="site" description="Important for 20(S)-OHC binding and stereoselectivity" evidence="2">
    <location>
        <position position="150"/>
    </location>
</feature>
<feature type="helix" evidence="15">
    <location>
        <begin position="6"/>
        <end position="27"/>
    </location>
</feature>
<feature type="helix" evidence="15">
    <location>
        <begin position="29"/>
        <end position="31"/>
    </location>
</feature>
<feature type="helix" evidence="15">
    <location>
        <begin position="36"/>
        <end position="38"/>
    </location>
</feature>
<feature type="helix" evidence="15">
    <location>
        <begin position="41"/>
        <end position="54"/>
    </location>
</feature>
<feature type="strand" evidence="15">
    <location>
        <begin position="57"/>
        <end position="61"/>
    </location>
</feature>
<feature type="helix" evidence="15">
    <location>
        <begin position="64"/>
        <end position="75"/>
    </location>
</feature>
<feature type="helix" evidence="15">
    <location>
        <begin position="77"/>
        <end position="90"/>
    </location>
</feature>
<feature type="helix" evidence="15">
    <location>
        <begin position="94"/>
        <end position="96"/>
    </location>
</feature>
<feature type="helix" evidence="15">
    <location>
        <begin position="97"/>
        <end position="120"/>
    </location>
</feature>
<feature type="turn" evidence="15">
    <location>
        <begin position="127"/>
        <end position="131"/>
    </location>
</feature>
<feature type="helix" evidence="15">
    <location>
        <begin position="137"/>
        <end position="147"/>
    </location>
</feature>
<feature type="helix" evidence="15">
    <location>
        <begin position="149"/>
        <end position="163"/>
    </location>
</feature>
<feature type="helix" evidence="16">
    <location>
        <begin position="165"/>
        <end position="167"/>
    </location>
</feature>
<name>SGMR2_BOVIN</name>
<keyword id="KW-0002">3D-structure</keyword>
<keyword id="KW-0256">Endoplasmic reticulum</keyword>
<keyword id="KW-0472">Membrane</keyword>
<keyword id="KW-0539">Nucleus</keyword>
<keyword id="KW-1185">Reference proteome</keyword>
<keyword id="KW-0812">Transmembrane</keyword>
<keyword id="KW-1133">Transmembrane helix</keyword>
<dbReference type="EMBL" id="BT029797">
    <property type="protein sequence ID" value="ABM06065.1"/>
    <property type="molecule type" value="mRNA"/>
</dbReference>
<dbReference type="EMBL" id="BC104594">
    <property type="protein sequence ID" value="AAI04595.1"/>
    <property type="molecule type" value="mRNA"/>
</dbReference>
<dbReference type="RefSeq" id="NP_001029575.1">
    <property type="nucleotide sequence ID" value="NM_001034403.1"/>
</dbReference>
<dbReference type="PDB" id="7M93">
    <property type="method" value="X-ray"/>
    <property type="resolution" value="2.94 A"/>
    <property type="chains" value="A/B/C/D=1-168"/>
</dbReference>
<dbReference type="PDB" id="7M94">
    <property type="method" value="X-ray"/>
    <property type="resolution" value="2.71 A"/>
    <property type="chains" value="A/B/C/D=1-168"/>
</dbReference>
<dbReference type="PDB" id="7M95">
    <property type="method" value="X-ray"/>
    <property type="resolution" value="2.41 A"/>
    <property type="chains" value="A/B=1-168"/>
</dbReference>
<dbReference type="PDB" id="7M96">
    <property type="method" value="X-ray"/>
    <property type="resolution" value="2.41 A"/>
    <property type="chains" value="A/B/C/D=1-168"/>
</dbReference>
<dbReference type="PDB" id="7MFI">
    <property type="method" value="X-ray"/>
    <property type="resolution" value="2.81 A"/>
    <property type="chains" value="A/B/C/D=1-168"/>
</dbReference>
<dbReference type="PDBsum" id="7M93"/>
<dbReference type="PDBsum" id="7M94"/>
<dbReference type="PDBsum" id="7M95"/>
<dbReference type="PDBsum" id="7M96"/>
<dbReference type="PDBsum" id="7MFI"/>
<dbReference type="SMR" id="Q3MHW7"/>
<dbReference type="FunCoup" id="Q3MHW7">
    <property type="interactions" value="1642"/>
</dbReference>
<dbReference type="STRING" id="9913.ENSBTAP00000010666"/>
<dbReference type="BindingDB" id="Q3MHW7"/>
<dbReference type="ChEMBL" id="CHEMBL5465309"/>
<dbReference type="PaxDb" id="9913-ENSBTAP00000010666"/>
<dbReference type="Ensembl" id="ENSBTAT00000010666.3">
    <property type="protein sequence ID" value="ENSBTAP00000010666.2"/>
    <property type="gene ID" value="ENSBTAG00000008109.4"/>
</dbReference>
<dbReference type="GeneID" id="511378"/>
<dbReference type="KEGG" id="bta:511378"/>
<dbReference type="CTD" id="27346"/>
<dbReference type="VEuPathDB" id="HostDB:ENSBTAG00000008109"/>
<dbReference type="VGNC" id="VGNC:36129">
    <property type="gene designation" value="TMEM97"/>
</dbReference>
<dbReference type="eggNOG" id="ENOG502RZRX">
    <property type="taxonomic scope" value="Eukaryota"/>
</dbReference>
<dbReference type="GeneTree" id="ENSGT00390000007149"/>
<dbReference type="HOGENOM" id="CLU_086812_1_0_1"/>
<dbReference type="InParanoid" id="Q3MHW7"/>
<dbReference type="OMA" id="EFKDPMV"/>
<dbReference type="OrthoDB" id="433124at2759"/>
<dbReference type="TreeFam" id="TF300241"/>
<dbReference type="Proteomes" id="UP000009136">
    <property type="component" value="Chromosome 19"/>
</dbReference>
<dbReference type="Bgee" id="ENSBTAG00000008109">
    <property type="expression patterns" value="Expressed in diaphragm and 105 other cell types or tissues"/>
</dbReference>
<dbReference type="GO" id="GO:0005783">
    <property type="term" value="C:endoplasmic reticulum"/>
    <property type="evidence" value="ECO:0000250"/>
    <property type="project" value="UniProtKB"/>
</dbReference>
<dbReference type="GO" id="GO:0005764">
    <property type="term" value="C:lysosome"/>
    <property type="evidence" value="ECO:0000250"/>
    <property type="project" value="UniProtKB"/>
</dbReference>
<dbReference type="GO" id="GO:0031965">
    <property type="term" value="C:nuclear membrane"/>
    <property type="evidence" value="ECO:0000250"/>
    <property type="project" value="UniProtKB"/>
</dbReference>
<dbReference type="GO" id="GO:0005886">
    <property type="term" value="C:plasma membrane"/>
    <property type="evidence" value="ECO:0000250"/>
    <property type="project" value="UniProtKB"/>
</dbReference>
<dbReference type="GO" id="GO:0005791">
    <property type="term" value="C:rough endoplasmic reticulum"/>
    <property type="evidence" value="ECO:0000250"/>
    <property type="project" value="UniProtKB"/>
</dbReference>
<dbReference type="GO" id="GO:0030867">
    <property type="term" value="C:rough endoplasmic reticulum membrane"/>
    <property type="evidence" value="ECO:0007669"/>
    <property type="project" value="UniProtKB-SubCell"/>
</dbReference>
<dbReference type="GO" id="GO:0015485">
    <property type="term" value="F:cholesterol binding"/>
    <property type="evidence" value="ECO:0000314"/>
    <property type="project" value="UniProtKB"/>
</dbReference>
<dbReference type="GO" id="GO:0008142">
    <property type="term" value="F:oxysterol binding"/>
    <property type="evidence" value="ECO:0000250"/>
    <property type="project" value="UniProtKB"/>
</dbReference>
<dbReference type="GO" id="GO:0042632">
    <property type="term" value="P:cholesterol homeostasis"/>
    <property type="evidence" value="ECO:0000250"/>
    <property type="project" value="UniProtKB"/>
</dbReference>
<dbReference type="GO" id="GO:0140077">
    <property type="term" value="P:positive regulation of lipoprotein transport"/>
    <property type="evidence" value="ECO:0000250"/>
    <property type="project" value="UniProtKB"/>
</dbReference>
<dbReference type="GO" id="GO:0090303">
    <property type="term" value="P:positive regulation of wound healing"/>
    <property type="evidence" value="ECO:0000250"/>
    <property type="project" value="UniProtKB"/>
</dbReference>
<dbReference type="GO" id="GO:0032383">
    <property type="term" value="P:regulation of intracellular cholesterol transport"/>
    <property type="evidence" value="ECO:0000250"/>
    <property type="project" value="UniProtKB"/>
</dbReference>
<dbReference type="GO" id="GO:0032377">
    <property type="term" value="P:regulation of intracellular lipid transport"/>
    <property type="evidence" value="ECO:0000250"/>
    <property type="project" value="UniProtKB"/>
</dbReference>
<dbReference type="InterPro" id="IPR033118">
    <property type="entry name" value="EXPERA"/>
</dbReference>
<dbReference type="InterPro" id="IPR051987">
    <property type="entry name" value="Sigma-2_receptor-like"/>
</dbReference>
<dbReference type="InterPro" id="IPR016964">
    <property type="entry name" value="Sigma2_recept"/>
</dbReference>
<dbReference type="PANTHER" id="PTHR31204">
    <property type="entry name" value="SIGMA INTRACELLULAR RECEPTOR 2"/>
    <property type="match status" value="1"/>
</dbReference>
<dbReference type="PANTHER" id="PTHR31204:SF1">
    <property type="entry name" value="SIGMA INTRACELLULAR RECEPTOR 2"/>
    <property type="match status" value="1"/>
</dbReference>
<dbReference type="Pfam" id="PF05241">
    <property type="entry name" value="EBP"/>
    <property type="match status" value="1"/>
</dbReference>
<dbReference type="PIRSF" id="PIRSF031032">
    <property type="entry name" value="TMP_97_prd"/>
    <property type="match status" value="1"/>
</dbReference>
<dbReference type="PROSITE" id="PS51751">
    <property type="entry name" value="EXPERA"/>
    <property type="match status" value="1"/>
</dbReference>
<comment type="function">
    <text evidence="1 2 5 6">Sigma-2 receptor which contributes to ameliorate dysfunctional cellular processes and slow degenerative progression by regulating cell functions including cholesterol biosynthesis/trafficking, membrane trafficking, autophagy, lipid membrane-bound protein trafficking, and receptor stabilization at the cell surface (PubMed:28559337). Forms a ternary complex with PGRMC1 receptor and low density lipoprotein receptor/LDLR at the plasma membrane, which increases LDLR-mediated LDL cholesterol internalization. Decreases lysosomal sterol transporter NPC1 availability to the cell, probably through NPC1-binding, hence controlling lipid transport, including cholesterol and LBPA, outside of late endosome/lysosome. Binds regio- and stereoselective ligand 20(S)-hydroxycholesterol (20(S)-OHC) which enhances TMEM97-NPC1 interaction and decreases TMEM97-PGRMC1 and TMEM97-TSPO interactions, thereby linking OHC binding to cholesterol homeostasis (By similarity). Also able to bind cholesterol (PubMed:34880501). Binds histatin 1 (Hst 1)/HN1 salivary peptide at the ER membrane, which is critical for increasing mitochondria-ER contacts and stimulating Hst1 wound healing properties. May alter the activity of some cytochrome P450 proteins. Although shows homologies with sterol isomerases (EXPERA domain), not able to catalyze sterol isomerization. However, may act as sensors of these molecules (By similarity). Acts as a quality control factor in the ER, promoting the proteolytic degradation of nonproductive and extramitochondrial precursor proteins in the ER membrane thus removing them from the ER surface (By similarity).</text>
</comment>
<comment type="subunit">
    <text evidence="2 9">Homodimer (Probable). Interacts with NPC1; the interaction impairs NPC1-mediated cholesterol transport. Interacts with PGRMC1 and LDLR; the interaction increases LDL internalization. Interacts with histatin 1/HTN1; the interaction induces HTN1-stimulating wound healing. Interacts with TSPO (By similarity).</text>
</comment>
<comment type="subcellular location">
    <subcellularLocation>
        <location evidence="2">Rough endoplasmic reticulum membrane</location>
        <topology evidence="3">Multi-pass membrane protein</topology>
    </subcellularLocation>
    <subcellularLocation>
        <location evidence="2">Nucleus membrane</location>
        <topology evidence="3">Multi-pass membrane protein</topology>
    </subcellularLocation>
</comment>
<comment type="domain">
    <text evidence="2">The EXPERA domain doesn't possess any sterol isomerase catalytic activity.</text>
</comment>
<comment type="domain">
    <text evidence="6">The four transmembrane helices are all kinked owing to the presence of proline residues in each, creating a ligand-binding cavity near the center of the protein.</text>
</comment>
<comment type="miscellaneous">
    <text evidence="2">Sigma receptors are classified into two subtypes (Sigma-1 and Sigma-2) based on their different pharmacological profile. Sigma-2 receptors are identified by radioligand-binding studies as a binding site with high affinity for di-o-tolylguanidine (DTG) and haloperidol.</text>
</comment>
<comment type="miscellaneous">
    <text evidence="9">Binds chemotype ligands that display antiallodynic effect.</text>
</comment>
<comment type="similarity">
    <text evidence="8">Belongs to the TMEM97/sigma-2 receptor family.</text>
</comment>
<comment type="caution">
    <text evidence="2 5">The molecular identity of the sigma-2 receptor has been unclear for a long time. It is now identified as TMEM97 (PubMed:28559337). Previously identified as PGRMC1.</text>
</comment>
<proteinExistence type="evidence at protein level"/>
<accession>Q3MHW7</accession>
<accession>A1L510</accession>
<gene>
    <name type="primary">TMEM97</name>
    <name evidence="7" type="synonym">S2R</name>
</gene>
<evidence type="ECO:0000250" key="1">
    <source>
        <dbReference type="UniProtKB" id="Q12155"/>
    </source>
</evidence>
<evidence type="ECO:0000250" key="2">
    <source>
        <dbReference type="UniProtKB" id="Q5BJF2"/>
    </source>
</evidence>
<evidence type="ECO:0000255" key="3"/>
<evidence type="ECO:0000255" key="4">
    <source>
        <dbReference type="PROSITE-ProRule" id="PRU01087"/>
    </source>
</evidence>
<evidence type="ECO:0000269" key="5">
    <source>
    </source>
</evidence>
<evidence type="ECO:0000269" key="6">
    <source>
    </source>
</evidence>
<evidence type="ECO:0000303" key="7">
    <source>
    </source>
</evidence>
<evidence type="ECO:0000305" key="8"/>
<evidence type="ECO:0000305" key="9">
    <source>
    </source>
</evidence>
<evidence type="ECO:0007744" key="10">
    <source>
        <dbReference type="PDB" id="7M93"/>
    </source>
</evidence>
<evidence type="ECO:0007744" key="11">
    <source>
        <dbReference type="PDB" id="7M94"/>
    </source>
</evidence>
<evidence type="ECO:0007744" key="12">
    <source>
        <dbReference type="PDB" id="7M95"/>
    </source>
</evidence>
<evidence type="ECO:0007744" key="13">
    <source>
        <dbReference type="PDB" id="7M96"/>
    </source>
</evidence>
<evidence type="ECO:0007744" key="14">
    <source>
        <dbReference type="PDB" id="7MFI"/>
    </source>
</evidence>
<evidence type="ECO:0007829" key="15">
    <source>
        <dbReference type="PDB" id="7M95"/>
    </source>
</evidence>
<evidence type="ECO:0007829" key="16">
    <source>
        <dbReference type="PDB" id="7M96"/>
    </source>
</evidence>